<comment type="cofactor">
    <cofactor evidence="1">
        <name>heme</name>
        <dbReference type="ChEBI" id="CHEBI:30413"/>
    </cofactor>
</comment>
<comment type="similarity">
    <text evidence="3">Belongs to the cytochrome P450 family.</text>
</comment>
<sequence>MSGTSSMGLPPGPRLSGSVQAVLMLRHGLRFLTACQRRYGSVFTLHVAGFGHMVYLSDPAAIKTVFAGNPSVFHAGEANSMLAGLLGDSSLLLIDDDVHRDRRRLMSPPFHRDAVARQAGPIAEIAAANIAGWPMAKAFAVAPKMSEITLEVILRTVIGASDPVRLAALRKVMPRLLNVGPWATLALANPSLLNNRLWSRLRRRIEEADALLYAEIADRRADPDLAARTDTLAMLVRAADEDGRTMTERELRDQLITLLVAGHDTTATGLSWALERLTRHPVTLAKAVQAADASAAGDPAGDEYLDAVAKETLRIRPVVYDVGRVLTEAVEVAGYRLPAGVMVVPAIGLVHASAQLYPDPERFDPDRMVGATLSPTTWLPFGGGNRRCLGATFAMVEMRVVLREILRRVELSTTTTSGERPKLKHVIMVPHRGARIRVRATRDVSATSQATAQGAGCPAARGGGPSRAVGSQ</sequence>
<dbReference type="EC" id="1.14.-.-"/>
<dbReference type="EMBL" id="LT708304">
    <property type="protein sequence ID" value="SIT99179.1"/>
    <property type="molecule type" value="Genomic_DNA"/>
</dbReference>
<dbReference type="RefSeq" id="NP_854243.1">
    <property type="nucleotide sequence ID" value="NC_002945.3"/>
</dbReference>
<dbReference type="RefSeq" id="WP_003402992.1">
    <property type="nucleotide sequence ID" value="NC_002945.4"/>
</dbReference>
<dbReference type="SMR" id="P63716"/>
<dbReference type="PATRIC" id="fig|233413.5.peg.631"/>
<dbReference type="Proteomes" id="UP000001419">
    <property type="component" value="Chromosome"/>
</dbReference>
<dbReference type="GO" id="GO:0020037">
    <property type="term" value="F:heme binding"/>
    <property type="evidence" value="ECO:0007669"/>
    <property type="project" value="InterPro"/>
</dbReference>
<dbReference type="GO" id="GO:0005506">
    <property type="term" value="F:iron ion binding"/>
    <property type="evidence" value="ECO:0007669"/>
    <property type="project" value="InterPro"/>
</dbReference>
<dbReference type="GO" id="GO:0004497">
    <property type="term" value="F:monooxygenase activity"/>
    <property type="evidence" value="ECO:0007669"/>
    <property type="project" value="UniProtKB-KW"/>
</dbReference>
<dbReference type="GO" id="GO:0016705">
    <property type="term" value="F:oxidoreductase activity, acting on paired donors, with incorporation or reduction of molecular oxygen"/>
    <property type="evidence" value="ECO:0007669"/>
    <property type="project" value="InterPro"/>
</dbReference>
<dbReference type="CDD" id="cd11053">
    <property type="entry name" value="CYP110-like"/>
    <property type="match status" value="1"/>
</dbReference>
<dbReference type="Gene3D" id="1.10.630.10">
    <property type="entry name" value="Cytochrome P450"/>
    <property type="match status" value="1"/>
</dbReference>
<dbReference type="InterPro" id="IPR001128">
    <property type="entry name" value="Cyt_P450"/>
</dbReference>
<dbReference type="InterPro" id="IPR017972">
    <property type="entry name" value="Cyt_P450_CS"/>
</dbReference>
<dbReference type="InterPro" id="IPR002401">
    <property type="entry name" value="Cyt_P450_E_grp-I"/>
</dbReference>
<dbReference type="InterPro" id="IPR036396">
    <property type="entry name" value="Cyt_P450_sf"/>
</dbReference>
<dbReference type="InterPro" id="IPR050121">
    <property type="entry name" value="Cytochrome_P450_monoxygenase"/>
</dbReference>
<dbReference type="PANTHER" id="PTHR24305">
    <property type="entry name" value="CYTOCHROME P450"/>
    <property type="match status" value="1"/>
</dbReference>
<dbReference type="PANTHER" id="PTHR24305:SF166">
    <property type="entry name" value="CYTOCHROME P450 12A4, MITOCHONDRIAL-RELATED"/>
    <property type="match status" value="1"/>
</dbReference>
<dbReference type="Pfam" id="PF00067">
    <property type="entry name" value="p450"/>
    <property type="match status" value="1"/>
</dbReference>
<dbReference type="PRINTS" id="PR00463">
    <property type="entry name" value="EP450I"/>
</dbReference>
<dbReference type="PRINTS" id="PR00385">
    <property type="entry name" value="P450"/>
</dbReference>
<dbReference type="SUPFAM" id="SSF48264">
    <property type="entry name" value="Cytochrome P450"/>
    <property type="match status" value="1"/>
</dbReference>
<dbReference type="PROSITE" id="PS00086">
    <property type="entry name" value="CYTOCHROME_P450"/>
    <property type="match status" value="1"/>
</dbReference>
<evidence type="ECO:0000250" key="1"/>
<evidence type="ECO:0000256" key="2">
    <source>
        <dbReference type="SAM" id="MobiDB-lite"/>
    </source>
</evidence>
<evidence type="ECO:0000305" key="3"/>
<organism>
    <name type="scientific">Mycobacterium bovis (strain ATCC BAA-935 / AF2122/97)</name>
    <dbReference type="NCBI Taxonomy" id="233413"/>
    <lineage>
        <taxon>Bacteria</taxon>
        <taxon>Bacillati</taxon>
        <taxon>Actinomycetota</taxon>
        <taxon>Actinomycetes</taxon>
        <taxon>Mycobacteriales</taxon>
        <taxon>Mycobacteriaceae</taxon>
        <taxon>Mycobacterium</taxon>
        <taxon>Mycobacterium tuberculosis complex</taxon>
    </lineage>
</organism>
<proteinExistence type="inferred from homology"/>
<name>C135B_MYCBO</name>
<gene>
    <name type="primary">cyp135B1</name>
    <name type="ordered locus">BQ2027_MB0583</name>
</gene>
<protein>
    <recommendedName>
        <fullName>Putative cytochrome P450 135B1</fullName>
        <ecNumber>1.14.-.-</ecNumber>
    </recommendedName>
</protein>
<reference key="1">
    <citation type="journal article" date="2003" name="Proc. Natl. Acad. Sci. U.S.A.">
        <title>The complete genome sequence of Mycobacterium bovis.</title>
        <authorList>
            <person name="Garnier T."/>
            <person name="Eiglmeier K."/>
            <person name="Camus J.-C."/>
            <person name="Medina N."/>
            <person name="Mansoor H."/>
            <person name="Pryor M."/>
            <person name="Duthoy S."/>
            <person name="Grondin S."/>
            <person name="Lacroix C."/>
            <person name="Monsempe C."/>
            <person name="Simon S."/>
            <person name="Harris B."/>
            <person name="Atkin R."/>
            <person name="Doggett J."/>
            <person name="Mayes R."/>
            <person name="Keating L."/>
            <person name="Wheeler P.R."/>
            <person name="Parkhill J."/>
            <person name="Barrell B.G."/>
            <person name="Cole S.T."/>
            <person name="Gordon S.V."/>
            <person name="Hewinson R.G."/>
        </authorList>
    </citation>
    <scope>NUCLEOTIDE SEQUENCE [LARGE SCALE GENOMIC DNA]</scope>
    <source>
        <strain>ATCC BAA-935 / AF2122/97</strain>
    </source>
</reference>
<reference key="2">
    <citation type="journal article" date="2017" name="Genome Announc.">
        <title>Updated reference genome sequence and annotation of Mycobacterium bovis AF2122/97.</title>
        <authorList>
            <person name="Malone K.M."/>
            <person name="Farrell D."/>
            <person name="Stuber T.P."/>
            <person name="Schubert O.T."/>
            <person name="Aebersold R."/>
            <person name="Robbe-Austerman S."/>
            <person name="Gordon S.V."/>
        </authorList>
    </citation>
    <scope>NUCLEOTIDE SEQUENCE [LARGE SCALE GENOMIC DNA]</scope>
    <scope>GENOME REANNOTATION</scope>
    <source>
        <strain>ATCC BAA-935 / AF2122/97</strain>
    </source>
</reference>
<keyword id="KW-0349">Heme</keyword>
<keyword id="KW-0408">Iron</keyword>
<keyword id="KW-0479">Metal-binding</keyword>
<keyword id="KW-0503">Monooxygenase</keyword>
<keyword id="KW-0560">Oxidoreductase</keyword>
<keyword id="KW-1185">Reference proteome</keyword>
<accession>P63716</accession>
<accession>A0A1R3XVR2</accession>
<accession>O53765</accession>
<accession>X2BFF0</accession>
<feature type="chain" id="PRO_0000052294" description="Putative cytochrome P450 135B1">
    <location>
        <begin position="1"/>
        <end position="472"/>
    </location>
</feature>
<feature type="region of interest" description="Disordered" evidence="2">
    <location>
        <begin position="442"/>
        <end position="472"/>
    </location>
</feature>
<feature type="compositionally biased region" description="Low complexity" evidence="2">
    <location>
        <begin position="452"/>
        <end position="472"/>
    </location>
</feature>
<feature type="binding site" description="axial binding residue" evidence="1">
    <location>
        <position position="388"/>
    </location>
    <ligand>
        <name>heme</name>
        <dbReference type="ChEBI" id="CHEBI:30413"/>
    </ligand>
    <ligandPart>
        <name>Fe</name>
        <dbReference type="ChEBI" id="CHEBI:18248"/>
    </ligandPart>
</feature>